<name>B3GT5_GORGO</name>
<reference key="1">
    <citation type="submission" date="2000-04" db="EMBL/GenBank/DDBJ databases">
        <authorList>
            <person name="Liu Y."/>
            <person name="Saitou N."/>
        </authorList>
    </citation>
    <scope>NUCLEOTIDE SEQUENCE [GENOMIC DNA]</scope>
</reference>
<gene>
    <name type="primary">B3GALT5</name>
</gene>
<proteinExistence type="inferred from homology"/>
<keyword id="KW-0325">Glycoprotein</keyword>
<keyword id="KW-0328">Glycosyltransferase</keyword>
<keyword id="KW-0333">Golgi apparatus</keyword>
<keyword id="KW-0443">Lipid metabolism</keyword>
<keyword id="KW-0472">Membrane</keyword>
<keyword id="KW-1185">Reference proteome</keyword>
<keyword id="KW-0735">Signal-anchor</keyword>
<keyword id="KW-0808">Transferase</keyword>
<keyword id="KW-0812">Transmembrane</keyword>
<keyword id="KW-1133">Transmembrane helix</keyword>
<feature type="chain" id="PRO_0000219163" description="Beta-1,3-galactosyltransferase 5">
    <location>
        <begin position="1"/>
        <end position="298" status="greater than"/>
    </location>
</feature>
<feature type="topological domain" description="Cytoplasmic" evidence="3">
    <location>
        <begin position="1"/>
        <end position="7"/>
    </location>
</feature>
<feature type="transmembrane region" description="Helical; Signal-anchor for type II membrane protein" evidence="3">
    <location>
        <begin position="8"/>
        <end position="28"/>
    </location>
</feature>
<feature type="topological domain" description="Lumenal" evidence="3">
    <location>
        <begin position="29"/>
        <end position="298" status="greater than"/>
    </location>
</feature>
<feature type="glycosylation site" description="N-linked (GlcNAc...) asparagine" evidence="3">
    <location>
        <position position="130"/>
    </location>
</feature>
<feature type="glycosylation site" description="N-linked (GlcNAc...) asparagine" evidence="3">
    <location>
        <position position="174"/>
    </location>
</feature>
<feature type="glycosylation site" description="N-linked (GlcNAc...) asparagine" evidence="3">
    <location>
        <position position="231"/>
    </location>
</feature>
<feature type="non-terminal residue">
    <location>
        <position position="298"/>
    </location>
</feature>
<evidence type="ECO:0000250" key="1"/>
<evidence type="ECO:0000250" key="2">
    <source>
        <dbReference type="UniProtKB" id="Q9Y2C3"/>
    </source>
</evidence>
<evidence type="ECO:0000255" key="3"/>
<evidence type="ECO:0000305" key="4"/>
<dbReference type="EC" id="2.4.1.-"/>
<dbReference type="EMBL" id="AB041412">
    <property type="protein sequence ID" value="BAA94497.1"/>
    <property type="molecule type" value="Genomic_DNA"/>
</dbReference>
<dbReference type="SMR" id="Q9N293"/>
<dbReference type="STRING" id="9593.ENSGGOP00000004126"/>
<dbReference type="GlyCosmos" id="Q9N293">
    <property type="glycosylation" value="3 sites, No reported glycans"/>
</dbReference>
<dbReference type="eggNOG" id="KOG2287">
    <property type="taxonomic scope" value="Eukaryota"/>
</dbReference>
<dbReference type="HOGENOM" id="CLU_036849_2_4_1"/>
<dbReference type="InParanoid" id="Q9N293"/>
<dbReference type="UniPathway" id="UPA00378"/>
<dbReference type="Proteomes" id="UP000001519">
    <property type="component" value="Unplaced"/>
</dbReference>
<dbReference type="GO" id="GO:0000139">
    <property type="term" value="C:Golgi membrane"/>
    <property type="evidence" value="ECO:0000318"/>
    <property type="project" value="GO_Central"/>
</dbReference>
<dbReference type="GO" id="GO:0008499">
    <property type="term" value="F:N-acetyl-beta-D-glucosaminide beta-(1,3)-galactosyltransferase activity"/>
    <property type="evidence" value="ECO:0000318"/>
    <property type="project" value="GO_Central"/>
</dbReference>
<dbReference type="GO" id="GO:0006629">
    <property type="term" value="P:lipid metabolic process"/>
    <property type="evidence" value="ECO:0007669"/>
    <property type="project" value="UniProtKB-KW"/>
</dbReference>
<dbReference type="GO" id="GO:0006493">
    <property type="term" value="P:protein O-linked glycosylation"/>
    <property type="evidence" value="ECO:0000318"/>
    <property type="project" value="GO_Central"/>
</dbReference>
<dbReference type="FunFam" id="3.90.550.50:FF:000001">
    <property type="entry name" value="Hexosyltransferase"/>
    <property type="match status" value="1"/>
</dbReference>
<dbReference type="Gene3D" id="3.90.550.50">
    <property type="match status" value="1"/>
</dbReference>
<dbReference type="InterPro" id="IPR002659">
    <property type="entry name" value="Glyco_trans_31"/>
</dbReference>
<dbReference type="PANTHER" id="PTHR11214:SF265">
    <property type="entry name" value="BETA-1,3-GALACTOSYLTRANSFERASE 5"/>
    <property type="match status" value="1"/>
</dbReference>
<dbReference type="PANTHER" id="PTHR11214">
    <property type="entry name" value="BETA-1,3-N-ACETYLGLUCOSAMINYLTRANSFERASE"/>
    <property type="match status" value="1"/>
</dbReference>
<dbReference type="Pfam" id="PF01762">
    <property type="entry name" value="Galactosyl_T"/>
    <property type="match status" value="1"/>
</dbReference>
<accession>Q9N293</accession>
<protein>
    <recommendedName>
        <fullName>Beta-1,3-galactosyltransferase 5</fullName>
        <shortName>Beta-1,3-GalTase 5</shortName>
        <shortName>Beta3Gal-T5</shortName>
        <shortName>Beta3GalT5</shortName>
        <shortName>b3Gal-T5</shortName>
        <ecNumber>2.4.1.-</ecNumber>
    </recommendedName>
    <alternativeName>
        <fullName>Beta-3-Gx-T5</fullName>
    </alternativeName>
    <alternativeName>
        <fullName>UDP-Gal:beta-GlcNAc beta-1,3-galactosyltransferase 5</fullName>
    </alternativeName>
    <alternativeName>
        <fullName>UDP-galactose:beta-N-acetylglucosamine beta-1,3-galactosyltransferase 5</fullName>
    </alternativeName>
</protein>
<organism>
    <name type="scientific">Gorilla gorilla gorilla</name>
    <name type="common">Western lowland gorilla</name>
    <dbReference type="NCBI Taxonomy" id="9595"/>
    <lineage>
        <taxon>Eukaryota</taxon>
        <taxon>Metazoa</taxon>
        <taxon>Chordata</taxon>
        <taxon>Craniata</taxon>
        <taxon>Vertebrata</taxon>
        <taxon>Euteleostomi</taxon>
        <taxon>Mammalia</taxon>
        <taxon>Eutheria</taxon>
        <taxon>Euarchontoglires</taxon>
        <taxon>Primates</taxon>
        <taxon>Haplorrhini</taxon>
        <taxon>Catarrhini</taxon>
        <taxon>Hominidae</taxon>
        <taxon>Gorilla</taxon>
    </lineage>
</organism>
<sequence length="298" mass="34976">MAFPKMRLMYICLLVLGALCLYFSMYSLNPFKEQSFVYKKDVNFLKLPDTDCRQTPPFLVLLVTSSHKQLAERMAIRQTWGKERTVKGKQLKTFFLLGTTSSAAETKEVDQESRRHGDIIQKDFLDVYYNLTLKTMMGIEWVHRFCPQAAFVMKTDSDMFINVDYLTELLLKKNRTTRFFTGFLKLNEFPIRQPFSKWFVSKSEYPWDRYPPFCSGTGYVFSGDVASQVYNVSESVPYIKLEDVFVGLCLERLNIRLEELHSQPTFFPGGLRFSVCRFRRIVACHFIKPRTLLDYWQA</sequence>
<comment type="function">
    <text evidence="1">Catalyzes the transfer of Gal to GlcNAc-based acceptors with a preference for the core3 O-linked glycan GlcNAc(beta1,3)GalNAc structure. Can use glycolipid LC3Cer as an efficient acceptor (By similarity).</text>
</comment>
<comment type="catalytic activity">
    <reaction evidence="2">
        <text>a globoside Gb4Cer (d18:1(4E)) + UDP-alpha-D-galactose = a globoside GalGb4Cer (d18:1(4E)) + UDP + H(+)</text>
        <dbReference type="Rhea" id="RHEA:41996"/>
        <dbReference type="ChEBI" id="CHEBI:15378"/>
        <dbReference type="ChEBI" id="CHEBI:18259"/>
        <dbReference type="ChEBI" id="CHEBI:58223"/>
        <dbReference type="ChEBI" id="CHEBI:62571"/>
        <dbReference type="ChEBI" id="CHEBI:66914"/>
    </reaction>
    <physiologicalReaction direction="left-to-right" evidence="2">
        <dbReference type="Rhea" id="RHEA:41997"/>
    </physiologicalReaction>
</comment>
<comment type="pathway">
    <text>Protein modification; protein glycosylation.</text>
</comment>
<comment type="subcellular location">
    <subcellularLocation>
        <location evidence="4">Golgi apparatus membrane</location>
        <topology evidence="4">Single-pass type II membrane protein</topology>
    </subcellularLocation>
</comment>
<comment type="similarity">
    <text evidence="4">Belongs to the glycosyltransferase 31 family.</text>
</comment>